<proteinExistence type="inferred from homology"/>
<name>UREG_BORPA</name>
<comment type="function">
    <text evidence="1">Facilitates the functional incorporation of the urease nickel metallocenter. This process requires GTP hydrolysis, probably effectuated by UreG.</text>
</comment>
<comment type="subunit">
    <text evidence="1">Homodimer. UreD, UreF and UreG form a complex that acts as a GTP-hydrolysis-dependent molecular chaperone, activating the urease apoprotein by helping to assemble the nickel containing metallocenter of UreC. The UreE protein probably delivers the nickel.</text>
</comment>
<comment type="subcellular location">
    <subcellularLocation>
        <location evidence="1">Cytoplasm</location>
    </subcellularLocation>
</comment>
<comment type="similarity">
    <text evidence="1">Belongs to the SIMIBI class G3E GTPase family. UreG subfamily.</text>
</comment>
<accession>P0A4R8</accession>
<accession>O06709</accession>
<keyword id="KW-0143">Chaperone</keyword>
<keyword id="KW-0963">Cytoplasm</keyword>
<keyword id="KW-0342">GTP-binding</keyword>
<keyword id="KW-0996">Nickel insertion</keyword>
<keyword id="KW-0547">Nucleotide-binding</keyword>
<dbReference type="EMBL" id="BX640435">
    <property type="protein sequence ID" value="CAE39135.1"/>
    <property type="molecule type" value="Genomic_DNA"/>
</dbReference>
<dbReference type="RefSeq" id="WP_003814817.1">
    <property type="nucleotide sequence ID" value="NC_002928.3"/>
</dbReference>
<dbReference type="SMR" id="P0A4R8"/>
<dbReference type="GeneID" id="93205650"/>
<dbReference type="KEGG" id="bpa:BPP3852"/>
<dbReference type="HOGENOM" id="CLU_072144_1_0_4"/>
<dbReference type="Proteomes" id="UP000001421">
    <property type="component" value="Chromosome"/>
</dbReference>
<dbReference type="GO" id="GO:0005737">
    <property type="term" value="C:cytoplasm"/>
    <property type="evidence" value="ECO:0007669"/>
    <property type="project" value="UniProtKB-SubCell"/>
</dbReference>
<dbReference type="GO" id="GO:0005525">
    <property type="term" value="F:GTP binding"/>
    <property type="evidence" value="ECO:0007669"/>
    <property type="project" value="UniProtKB-KW"/>
</dbReference>
<dbReference type="GO" id="GO:0003924">
    <property type="term" value="F:GTPase activity"/>
    <property type="evidence" value="ECO:0007669"/>
    <property type="project" value="InterPro"/>
</dbReference>
<dbReference type="GO" id="GO:0016151">
    <property type="term" value="F:nickel cation binding"/>
    <property type="evidence" value="ECO:0007669"/>
    <property type="project" value="UniProtKB-UniRule"/>
</dbReference>
<dbReference type="GO" id="GO:0043419">
    <property type="term" value="P:urea catabolic process"/>
    <property type="evidence" value="ECO:0007669"/>
    <property type="project" value="InterPro"/>
</dbReference>
<dbReference type="CDD" id="cd05540">
    <property type="entry name" value="UreG"/>
    <property type="match status" value="1"/>
</dbReference>
<dbReference type="FunFam" id="3.40.50.300:FF:000208">
    <property type="entry name" value="Urease accessory protein UreG"/>
    <property type="match status" value="1"/>
</dbReference>
<dbReference type="Gene3D" id="3.40.50.300">
    <property type="entry name" value="P-loop containing nucleotide triphosphate hydrolases"/>
    <property type="match status" value="1"/>
</dbReference>
<dbReference type="HAMAP" id="MF_01389">
    <property type="entry name" value="UreG"/>
    <property type="match status" value="1"/>
</dbReference>
<dbReference type="InterPro" id="IPR003495">
    <property type="entry name" value="CobW/HypB/UreG_nucleotide-bd"/>
</dbReference>
<dbReference type="InterPro" id="IPR027417">
    <property type="entry name" value="P-loop_NTPase"/>
</dbReference>
<dbReference type="InterPro" id="IPR004400">
    <property type="entry name" value="UreG"/>
</dbReference>
<dbReference type="NCBIfam" id="TIGR00101">
    <property type="entry name" value="ureG"/>
    <property type="match status" value="1"/>
</dbReference>
<dbReference type="PANTHER" id="PTHR31715">
    <property type="entry name" value="UREASE ACCESSORY PROTEIN G"/>
    <property type="match status" value="1"/>
</dbReference>
<dbReference type="PANTHER" id="PTHR31715:SF0">
    <property type="entry name" value="UREASE ACCESSORY PROTEIN G"/>
    <property type="match status" value="1"/>
</dbReference>
<dbReference type="Pfam" id="PF02492">
    <property type="entry name" value="cobW"/>
    <property type="match status" value="1"/>
</dbReference>
<dbReference type="PIRSF" id="PIRSF005624">
    <property type="entry name" value="Ni-bind_GTPase"/>
    <property type="match status" value="1"/>
</dbReference>
<dbReference type="SUPFAM" id="SSF52540">
    <property type="entry name" value="P-loop containing nucleoside triphosphate hydrolases"/>
    <property type="match status" value="1"/>
</dbReference>
<gene>
    <name evidence="1" type="primary">ureG</name>
    <name type="ordered locus">BPP3852</name>
</gene>
<feature type="chain" id="PRO_0000067663" description="Urease accessory protein UreG">
    <location>
        <begin position="1"/>
        <end position="214"/>
    </location>
</feature>
<feature type="binding site" evidence="1">
    <location>
        <begin position="23"/>
        <end position="30"/>
    </location>
    <ligand>
        <name>GTP</name>
        <dbReference type="ChEBI" id="CHEBI:37565"/>
    </ligand>
</feature>
<evidence type="ECO:0000255" key="1">
    <source>
        <dbReference type="HAMAP-Rule" id="MF_01389"/>
    </source>
</evidence>
<sequence length="214" mass="23072">MHDISSLTTRTKTLPPLRVGVGGPVGSGKTTLLEMVCKAMYPQFDLIAITNDIYTKEDQRLLTLSGALPPERILGVETGGCPHTAIREDASINLIAIDQMLEQFPDADIVFVESGGDNLAATFSPELSDLTLYIIDVASGEKIPRKGGPGITKSDLFIINKTDLAPYVGADLAVMEADTRRMRGDKPFVMCNLKTGDGLDQVIAFLKTEGLFRG</sequence>
<reference key="1">
    <citation type="journal article" date="2003" name="Nat. Genet.">
        <title>Comparative analysis of the genome sequences of Bordetella pertussis, Bordetella parapertussis and Bordetella bronchiseptica.</title>
        <authorList>
            <person name="Parkhill J."/>
            <person name="Sebaihia M."/>
            <person name="Preston A."/>
            <person name="Murphy L.D."/>
            <person name="Thomson N.R."/>
            <person name="Harris D.E."/>
            <person name="Holden M.T.G."/>
            <person name="Churcher C.M."/>
            <person name="Bentley S.D."/>
            <person name="Mungall K.L."/>
            <person name="Cerdeno-Tarraga A.-M."/>
            <person name="Temple L."/>
            <person name="James K.D."/>
            <person name="Harris B."/>
            <person name="Quail M.A."/>
            <person name="Achtman M."/>
            <person name="Atkin R."/>
            <person name="Baker S."/>
            <person name="Basham D."/>
            <person name="Bason N."/>
            <person name="Cherevach I."/>
            <person name="Chillingworth T."/>
            <person name="Collins M."/>
            <person name="Cronin A."/>
            <person name="Davis P."/>
            <person name="Doggett J."/>
            <person name="Feltwell T."/>
            <person name="Goble A."/>
            <person name="Hamlin N."/>
            <person name="Hauser H."/>
            <person name="Holroyd S."/>
            <person name="Jagels K."/>
            <person name="Leather S."/>
            <person name="Moule S."/>
            <person name="Norberczak H."/>
            <person name="O'Neil S."/>
            <person name="Ormond D."/>
            <person name="Price C."/>
            <person name="Rabbinowitsch E."/>
            <person name="Rutter S."/>
            <person name="Sanders M."/>
            <person name="Saunders D."/>
            <person name="Seeger K."/>
            <person name="Sharp S."/>
            <person name="Simmonds M."/>
            <person name="Skelton J."/>
            <person name="Squares R."/>
            <person name="Squares S."/>
            <person name="Stevens K."/>
            <person name="Unwin L."/>
            <person name="Whitehead S."/>
            <person name="Barrell B.G."/>
            <person name="Maskell D.J."/>
        </authorList>
    </citation>
    <scope>NUCLEOTIDE SEQUENCE [LARGE SCALE GENOMIC DNA]</scope>
    <source>
        <strain>12822 / ATCC BAA-587 / NCTC 13253</strain>
    </source>
</reference>
<organism>
    <name type="scientific">Bordetella parapertussis (strain 12822 / ATCC BAA-587 / NCTC 13253)</name>
    <dbReference type="NCBI Taxonomy" id="257311"/>
    <lineage>
        <taxon>Bacteria</taxon>
        <taxon>Pseudomonadati</taxon>
        <taxon>Pseudomonadota</taxon>
        <taxon>Betaproteobacteria</taxon>
        <taxon>Burkholderiales</taxon>
        <taxon>Alcaligenaceae</taxon>
        <taxon>Bordetella</taxon>
    </lineage>
</organism>
<protein>
    <recommendedName>
        <fullName evidence="1">Urease accessory protein UreG</fullName>
    </recommendedName>
</protein>